<dbReference type="EMBL" id="CP000243">
    <property type="protein sequence ID" value="ABE07818.1"/>
    <property type="molecule type" value="Genomic_DNA"/>
</dbReference>
<dbReference type="RefSeq" id="WP_001197878.1">
    <property type="nucleotide sequence ID" value="NZ_CP064825.1"/>
</dbReference>
<dbReference type="SMR" id="Q1R9Z6"/>
<dbReference type="KEGG" id="eci:UTI89_C2350"/>
<dbReference type="HOGENOM" id="CLU_002755_1_2_6"/>
<dbReference type="Proteomes" id="UP000001952">
    <property type="component" value="Chromosome"/>
</dbReference>
<dbReference type="GO" id="GO:0005886">
    <property type="term" value="C:plasma membrane"/>
    <property type="evidence" value="ECO:0007669"/>
    <property type="project" value="UniProtKB-SubCell"/>
</dbReference>
<dbReference type="GO" id="GO:0042910">
    <property type="term" value="F:xenobiotic transmembrane transporter activity"/>
    <property type="evidence" value="ECO:0007669"/>
    <property type="project" value="TreeGrafter"/>
</dbReference>
<dbReference type="FunFam" id="1.20.1640.10:FF:000001">
    <property type="entry name" value="Efflux pump membrane transporter"/>
    <property type="match status" value="1"/>
</dbReference>
<dbReference type="FunFam" id="3.30.70.1430:FF:000001">
    <property type="entry name" value="Efflux pump membrane transporter"/>
    <property type="match status" value="1"/>
</dbReference>
<dbReference type="FunFam" id="3.30.2090.10:FF:000003">
    <property type="entry name" value="Multidrug resistance protein MdtB"/>
    <property type="match status" value="1"/>
</dbReference>
<dbReference type="FunFam" id="3.30.2090.10:FF:000006">
    <property type="entry name" value="Multidrug resistance protein MdtB"/>
    <property type="match status" value="1"/>
</dbReference>
<dbReference type="Gene3D" id="3.30.70.1430">
    <property type="entry name" value="Multidrug efflux transporter AcrB pore domain"/>
    <property type="match status" value="2"/>
</dbReference>
<dbReference type="Gene3D" id="3.30.70.1440">
    <property type="entry name" value="Multidrug efflux transporter AcrB pore domain"/>
    <property type="match status" value="1"/>
</dbReference>
<dbReference type="Gene3D" id="3.30.70.1320">
    <property type="entry name" value="Multidrug efflux transporter AcrB pore domain like"/>
    <property type="match status" value="1"/>
</dbReference>
<dbReference type="Gene3D" id="3.30.2090.10">
    <property type="entry name" value="Multidrug efflux transporter AcrB TolC docking domain, DN and DC subdomains"/>
    <property type="match status" value="2"/>
</dbReference>
<dbReference type="Gene3D" id="1.20.1640.10">
    <property type="entry name" value="Multidrug efflux transporter AcrB transmembrane domain"/>
    <property type="match status" value="2"/>
</dbReference>
<dbReference type="HAMAP" id="MF_01423">
    <property type="entry name" value="MdtB"/>
    <property type="match status" value="1"/>
</dbReference>
<dbReference type="InterPro" id="IPR027463">
    <property type="entry name" value="AcrB_DN_DC_subdom"/>
</dbReference>
<dbReference type="InterPro" id="IPR001036">
    <property type="entry name" value="Acrflvin-R"/>
</dbReference>
<dbReference type="InterPro" id="IPR022831">
    <property type="entry name" value="Multidrug-R_MdtB"/>
</dbReference>
<dbReference type="NCBIfam" id="NF007798">
    <property type="entry name" value="PRK10503.1"/>
    <property type="match status" value="1"/>
</dbReference>
<dbReference type="NCBIfam" id="NF033617">
    <property type="entry name" value="RND_permease_2"/>
    <property type="match status" value="1"/>
</dbReference>
<dbReference type="PANTHER" id="PTHR32063">
    <property type="match status" value="1"/>
</dbReference>
<dbReference type="PANTHER" id="PTHR32063:SF21">
    <property type="entry name" value="MULTIDRUG RESISTANCE PROTEIN MDTB"/>
    <property type="match status" value="1"/>
</dbReference>
<dbReference type="Pfam" id="PF00873">
    <property type="entry name" value="ACR_tran"/>
    <property type="match status" value="1"/>
</dbReference>
<dbReference type="PRINTS" id="PR00702">
    <property type="entry name" value="ACRIFLAVINRP"/>
</dbReference>
<dbReference type="SUPFAM" id="SSF82693">
    <property type="entry name" value="Multidrug efflux transporter AcrB pore domain, PN1, PN2, PC1 and PC2 subdomains"/>
    <property type="match status" value="3"/>
</dbReference>
<dbReference type="SUPFAM" id="SSF82714">
    <property type="entry name" value="Multidrug efflux transporter AcrB TolC docking domain, DN and DC subdomains"/>
    <property type="match status" value="2"/>
</dbReference>
<dbReference type="SUPFAM" id="SSF82866">
    <property type="entry name" value="Multidrug efflux transporter AcrB transmembrane domain"/>
    <property type="match status" value="2"/>
</dbReference>
<keyword id="KW-0997">Cell inner membrane</keyword>
<keyword id="KW-1003">Cell membrane</keyword>
<keyword id="KW-0472">Membrane</keyword>
<keyword id="KW-0812">Transmembrane</keyword>
<keyword id="KW-1133">Transmembrane helix</keyword>
<keyword id="KW-0813">Transport</keyword>
<evidence type="ECO:0000255" key="1">
    <source>
        <dbReference type="HAMAP-Rule" id="MF_01423"/>
    </source>
</evidence>
<sequence>MQVLPPSSTGGPSRLFIMRPVATTLLMVAILLAGIIGYRALPVSALPEVDYPTIQVVTLYPGASPDVMTSAVTAPLERQFGQMSGLKQMSSQSSGGASVITLQFQLTLPLDVAEQEVQAAINAATNLLPSDLPNPPVYSKVNPADPPIMTLAVTSTAMPMTQVEDMVETRVAQKISQISGVGLVTLSGGQRPAVRVKLNAQAIAALGLTSETVRTAITGANVNSAKGSLDGPSRAVTLSANDQMQSAEEYRQLIIAYQNGAPIRLGDVATVEQGAENSWLGAWANKEQAIVMNVQRQPGANIISTADSIRQMLPQLTESLPKSVKVTVLSDRTTNIRASVDDTQFELMMAIALVVMIIYLFLRNIPATIIPGVAVPLSLIGTFAVMVFLDFSINNLTLMALTIATGFVVDDAIVVIENISRYIEKGEKPLAAALKGAGEIGFTIISLTFSLIAVLIPLLFMGDIVGRLFREFAITLAVAILISAVVSLTLTPMMCARMLSQESLRKQNRFSRASEKMFDRIIAAYGRGLAKVLNHPWLTLSVALSTLLLSVLLWVFIPKGFFPVQDNGIIQGTLQAPQSSSFANMAQRQRQVADVILQDPAVQSLTSFVGVDGTNPSLNSARLQINLKPLDERDDRVQKVIARLQTAVDKVPGVDLFLQPTQDLTIDTQVSRTQYQFTLQATSLDALSTWVPQLMEKLQQLPQLSDVSSDWQDKGLVAYVNVDRDSASRLGISMADVDNALYNAFGQRLISTIYTQANQYRVVLEHNTENTPGLAALDTIRLTSSDGGVVPLSSIAKIEQRFAPLSINHLDQFPVTTISFNVPDNYSLGDAVQAIMDTEKTLNLPVDITTQFQGSTLAFQSALGSTVWLIVAAVVAMYIVLGILYESFIHPITILSTLPTAGVGALLALMIAGSELDVIAIIGIILLIGIVKKNAIMMIDFALAAEREQGMSPREAIYQACLLRFRPILMTTLAALLGALPLMLSTGVGAELRRPLGIGMVGGLIVSQVLTLFTTPVIYLLFDRLALWTKSRFARHEEEA</sequence>
<accession>Q1R9Z6</accession>
<organism>
    <name type="scientific">Escherichia coli (strain UTI89 / UPEC)</name>
    <dbReference type="NCBI Taxonomy" id="364106"/>
    <lineage>
        <taxon>Bacteria</taxon>
        <taxon>Pseudomonadati</taxon>
        <taxon>Pseudomonadota</taxon>
        <taxon>Gammaproteobacteria</taxon>
        <taxon>Enterobacterales</taxon>
        <taxon>Enterobacteriaceae</taxon>
        <taxon>Escherichia</taxon>
    </lineage>
</organism>
<feature type="chain" id="PRO_1000024302" description="Multidrug resistance protein MdtB">
    <location>
        <begin position="1"/>
        <end position="1040"/>
    </location>
</feature>
<feature type="transmembrane region" description="Helical" evidence="1">
    <location>
        <begin position="16"/>
        <end position="36"/>
    </location>
</feature>
<feature type="transmembrane region" description="Helical" evidence="1">
    <location>
        <begin position="347"/>
        <end position="367"/>
    </location>
</feature>
<feature type="transmembrane region" description="Helical" evidence="1">
    <location>
        <begin position="369"/>
        <end position="389"/>
    </location>
</feature>
<feature type="transmembrane region" description="Helical" evidence="1">
    <location>
        <begin position="396"/>
        <end position="416"/>
    </location>
</feature>
<feature type="transmembrane region" description="Helical" evidence="1">
    <location>
        <begin position="440"/>
        <end position="460"/>
    </location>
</feature>
<feature type="transmembrane region" description="Helical" evidence="1">
    <location>
        <begin position="472"/>
        <end position="492"/>
    </location>
</feature>
<feature type="transmembrane region" description="Helical" evidence="1">
    <location>
        <begin position="537"/>
        <end position="557"/>
    </location>
</feature>
<feature type="transmembrane region" description="Helical" evidence="1">
    <location>
        <begin position="863"/>
        <end position="883"/>
    </location>
</feature>
<feature type="transmembrane region" description="Helical" evidence="1">
    <location>
        <begin position="888"/>
        <end position="908"/>
    </location>
</feature>
<feature type="transmembrane region" description="Helical" evidence="1">
    <location>
        <begin position="911"/>
        <end position="931"/>
    </location>
</feature>
<feature type="transmembrane region" description="Helical" evidence="1">
    <location>
        <begin position="968"/>
        <end position="988"/>
    </location>
</feature>
<feature type="transmembrane region" description="Helical" evidence="1">
    <location>
        <begin position="998"/>
        <end position="1018"/>
    </location>
</feature>
<reference key="1">
    <citation type="journal article" date="2006" name="Proc. Natl. Acad. Sci. U.S.A.">
        <title>Identification of genes subject to positive selection in uropathogenic strains of Escherichia coli: a comparative genomics approach.</title>
        <authorList>
            <person name="Chen S.L."/>
            <person name="Hung C.-S."/>
            <person name="Xu J."/>
            <person name="Reigstad C.S."/>
            <person name="Magrini V."/>
            <person name="Sabo A."/>
            <person name="Blasiar D."/>
            <person name="Bieri T."/>
            <person name="Meyer R.R."/>
            <person name="Ozersky P."/>
            <person name="Armstrong J.R."/>
            <person name="Fulton R.S."/>
            <person name="Latreille J.P."/>
            <person name="Spieth J."/>
            <person name="Hooton T.M."/>
            <person name="Mardis E.R."/>
            <person name="Hultgren S.J."/>
            <person name="Gordon J.I."/>
        </authorList>
    </citation>
    <scope>NUCLEOTIDE SEQUENCE [LARGE SCALE GENOMIC DNA]</scope>
    <source>
        <strain>UTI89 / UPEC</strain>
    </source>
</reference>
<comment type="function">
    <text evidence="1">The MdtABC tripartite complex confers resistance against novobiocin and deoxycholate.</text>
</comment>
<comment type="subunit">
    <text evidence="1">Part of a tripartite efflux system composed of MdtA, MdtB and MdtC. MdtB forms a heteromultimer with MdtC.</text>
</comment>
<comment type="subcellular location">
    <subcellularLocation>
        <location evidence="1">Cell inner membrane</location>
        <topology evidence="1">Multi-pass membrane protein</topology>
    </subcellularLocation>
</comment>
<comment type="induction">
    <text>The mdtABC operon is transcriptionally activated by BaeR.</text>
</comment>
<comment type="similarity">
    <text evidence="1">Belongs to the resistance-nodulation-cell division (RND) (TC 2.A.6) family. MdtB subfamily.</text>
</comment>
<proteinExistence type="evidence at transcript level"/>
<name>MDTB_ECOUT</name>
<gene>
    <name evidence="1" type="primary">mdtB</name>
    <name type="ordered locus">UTI89_C2350</name>
</gene>
<protein>
    <recommendedName>
        <fullName evidence="1">Multidrug resistance protein MdtB</fullName>
    </recommendedName>
    <alternativeName>
        <fullName evidence="1">Multidrug transporter MdtB</fullName>
    </alternativeName>
</protein>